<feature type="chain" id="PRO_0000124962" description="Large ribosomal subunit protein uL5">
    <location>
        <begin position="1"/>
        <end position="179"/>
    </location>
</feature>
<evidence type="ECO:0000255" key="1">
    <source>
        <dbReference type="HAMAP-Rule" id="MF_01333"/>
    </source>
</evidence>
<evidence type="ECO:0000305" key="2"/>
<dbReference type="EMBL" id="AE004439">
    <property type="protein sequence ID" value="AAK03487.1"/>
    <property type="molecule type" value="Genomic_DNA"/>
</dbReference>
<dbReference type="RefSeq" id="WP_005717921.1">
    <property type="nucleotide sequence ID" value="NC_002663.1"/>
</dbReference>
<dbReference type="SMR" id="Q9CL42"/>
<dbReference type="STRING" id="272843.PM1403"/>
<dbReference type="EnsemblBacteria" id="AAK03487">
    <property type="protein sequence ID" value="AAK03487"/>
    <property type="gene ID" value="PM1403"/>
</dbReference>
<dbReference type="GeneID" id="77207038"/>
<dbReference type="KEGG" id="pmu:PM1403"/>
<dbReference type="HOGENOM" id="CLU_061015_2_1_6"/>
<dbReference type="OrthoDB" id="9806626at2"/>
<dbReference type="Proteomes" id="UP000000809">
    <property type="component" value="Chromosome"/>
</dbReference>
<dbReference type="GO" id="GO:1990904">
    <property type="term" value="C:ribonucleoprotein complex"/>
    <property type="evidence" value="ECO:0007669"/>
    <property type="project" value="UniProtKB-KW"/>
</dbReference>
<dbReference type="GO" id="GO:0005840">
    <property type="term" value="C:ribosome"/>
    <property type="evidence" value="ECO:0007669"/>
    <property type="project" value="UniProtKB-KW"/>
</dbReference>
<dbReference type="GO" id="GO:0019843">
    <property type="term" value="F:rRNA binding"/>
    <property type="evidence" value="ECO:0007669"/>
    <property type="project" value="UniProtKB-UniRule"/>
</dbReference>
<dbReference type="GO" id="GO:0003735">
    <property type="term" value="F:structural constituent of ribosome"/>
    <property type="evidence" value="ECO:0007669"/>
    <property type="project" value="InterPro"/>
</dbReference>
<dbReference type="GO" id="GO:0000049">
    <property type="term" value="F:tRNA binding"/>
    <property type="evidence" value="ECO:0007669"/>
    <property type="project" value="UniProtKB-UniRule"/>
</dbReference>
<dbReference type="GO" id="GO:0006412">
    <property type="term" value="P:translation"/>
    <property type="evidence" value="ECO:0007669"/>
    <property type="project" value="UniProtKB-UniRule"/>
</dbReference>
<dbReference type="FunFam" id="3.30.1440.10:FF:000001">
    <property type="entry name" value="50S ribosomal protein L5"/>
    <property type="match status" value="1"/>
</dbReference>
<dbReference type="Gene3D" id="3.30.1440.10">
    <property type="match status" value="1"/>
</dbReference>
<dbReference type="HAMAP" id="MF_01333_B">
    <property type="entry name" value="Ribosomal_uL5_B"/>
    <property type="match status" value="1"/>
</dbReference>
<dbReference type="InterPro" id="IPR002132">
    <property type="entry name" value="Ribosomal_uL5"/>
</dbReference>
<dbReference type="InterPro" id="IPR020930">
    <property type="entry name" value="Ribosomal_uL5_bac-type"/>
</dbReference>
<dbReference type="InterPro" id="IPR031309">
    <property type="entry name" value="Ribosomal_uL5_C"/>
</dbReference>
<dbReference type="InterPro" id="IPR020929">
    <property type="entry name" value="Ribosomal_uL5_CS"/>
</dbReference>
<dbReference type="InterPro" id="IPR022803">
    <property type="entry name" value="Ribosomal_uL5_dom_sf"/>
</dbReference>
<dbReference type="InterPro" id="IPR031310">
    <property type="entry name" value="Ribosomal_uL5_N"/>
</dbReference>
<dbReference type="NCBIfam" id="NF000585">
    <property type="entry name" value="PRK00010.1"/>
    <property type="match status" value="1"/>
</dbReference>
<dbReference type="PANTHER" id="PTHR11994">
    <property type="entry name" value="60S RIBOSOMAL PROTEIN L11-RELATED"/>
    <property type="match status" value="1"/>
</dbReference>
<dbReference type="Pfam" id="PF00281">
    <property type="entry name" value="Ribosomal_L5"/>
    <property type="match status" value="1"/>
</dbReference>
<dbReference type="Pfam" id="PF00673">
    <property type="entry name" value="Ribosomal_L5_C"/>
    <property type="match status" value="1"/>
</dbReference>
<dbReference type="PIRSF" id="PIRSF002161">
    <property type="entry name" value="Ribosomal_L5"/>
    <property type="match status" value="1"/>
</dbReference>
<dbReference type="SUPFAM" id="SSF55282">
    <property type="entry name" value="RL5-like"/>
    <property type="match status" value="1"/>
</dbReference>
<dbReference type="PROSITE" id="PS00358">
    <property type="entry name" value="RIBOSOMAL_L5"/>
    <property type="match status" value="1"/>
</dbReference>
<name>RL5_PASMU</name>
<comment type="function">
    <text evidence="1">This is one of the proteins that bind and probably mediate the attachment of the 5S RNA into the large ribosomal subunit, where it forms part of the central protuberance. In the 70S ribosome it contacts protein S13 of the 30S subunit (bridge B1b), connecting the 2 subunits; this bridge is implicated in subunit movement. Contacts the P site tRNA; the 5S rRNA and some of its associated proteins might help stabilize positioning of ribosome-bound tRNAs.</text>
</comment>
<comment type="subunit">
    <text evidence="1">Part of the 50S ribosomal subunit; part of the 5S rRNA/L5/L18/L25 subcomplex. Contacts the 5S rRNA and the P site tRNA. Forms a bridge to the 30S subunit in the 70S ribosome.</text>
</comment>
<comment type="similarity">
    <text evidence="1">Belongs to the universal ribosomal protein uL5 family.</text>
</comment>
<keyword id="KW-1185">Reference proteome</keyword>
<keyword id="KW-0687">Ribonucleoprotein</keyword>
<keyword id="KW-0689">Ribosomal protein</keyword>
<keyword id="KW-0694">RNA-binding</keyword>
<keyword id="KW-0699">rRNA-binding</keyword>
<keyword id="KW-0820">tRNA-binding</keyword>
<organism>
    <name type="scientific">Pasteurella multocida (strain Pm70)</name>
    <dbReference type="NCBI Taxonomy" id="272843"/>
    <lineage>
        <taxon>Bacteria</taxon>
        <taxon>Pseudomonadati</taxon>
        <taxon>Pseudomonadota</taxon>
        <taxon>Gammaproteobacteria</taxon>
        <taxon>Pasteurellales</taxon>
        <taxon>Pasteurellaceae</taxon>
        <taxon>Pasteurella</taxon>
    </lineage>
</organism>
<gene>
    <name evidence="1" type="primary">rplE</name>
    <name evidence="1" type="synonym">rpl5</name>
    <name type="ordered locus">PM1403</name>
</gene>
<sequence>MAKLHDYYRDQVVNELKDKFNYKSVMQVPRIEKITLNMGVGEALTDKKLLDNAVADLAAISGQKPLITKARKSVAGFKIRQGYPIGCKVTLRGERMWEFFERLITIAVPRIRDFRGLSAKSFDGRGNYSMGVREQIIFPEIDYDKVDRVRGLDITITTTAKSDEEGQALLAAFNFPFRK</sequence>
<protein>
    <recommendedName>
        <fullName evidence="1">Large ribosomal subunit protein uL5</fullName>
    </recommendedName>
    <alternativeName>
        <fullName evidence="2">50S ribosomal protein L5</fullName>
    </alternativeName>
</protein>
<proteinExistence type="inferred from homology"/>
<reference key="1">
    <citation type="journal article" date="2001" name="Proc. Natl. Acad. Sci. U.S.A.">
        <title>Complete genomic sequence of Pasteurella multocida Pm70.</title>
        <authorList>
            <person name="May B.J."/>
            <person name="Zhang Q."/>
            <person name="Li L.L."/>
            <person name="Paustian M.L."/>
            <person name="Whittam T.S."/>
            <person name="Kapur V."/>
        </authorList>
    </citation>
    <scope>NUCLEOTIDE SEQUENCE [LARGE SCALE GENOMIC DNA]</scope>
    <source>
        <strain>Pm70</strain>
    </source>
</reference>
<accession>Q9CL42</accession>